<protein>
    <recommendedName>
        <fullName evidence="1">Small ribosomal subunit protein uS13</fullName>
    </recommendedName>
    <alternativeName>
        <fullName evidence="3">30S ribosomal protein S13</fullName>
    </alternativeName>
</protein>
<accession>A4IZR2</accession>
<feature type="chain" id="PRO_0000306608" description="Small ribosomal subunit protein uS13">
    <location>
        <begin position="1"/>
        <end position="118"/>
    </location>
</feature>
<feature type="region of interest" description="Disordered" evidence="2">
    <location>
        <begin position="91"/>
        <end position="118"/>
    </location>
</feature>
<evidence type="ECO:0000255" key="1">
    <source>
        <dbReference type="HAMAP-Rule" id="MF_01315"/>
    </source>
</evidence>
<evidence type="ECO:0000256" key="2">
    <source>
        <dbReference type="SAM" id="MobiDB-lite"/>
    </source>
</evidence>
<evidence type="ECO:0000305" key="3"/>
<sequence>MARIAGVNIPVHKHTVIGLTSIYGIGKTRAQQICQTCNVDPTVKIKDLSEEQVESLRTEVAKFTVEGDLRREVSMDIKRLMDLGCFRGRRHRRSLPVRGQRTKTNARTRKGPRKPIKA</sequence>
<name>RS13_FRATW</name>
<gene>
    <name evidence="1" type="primary">rpsM</name>
    <name type="ordered locus">FTW_1736</name>
</gene>
<comment type="function">
    <text evidence="1">Located at the top of the head of the 30S subunit, it contacts several helices of the 16S rRNA. In the 70S ribosome it contacts the 23S rRNA (bridge B1a) and protein L5 of the 50S subunit (bridge B1b), connecting the 2 subunits; these bridges are implicated in subunit movement. Contacts the tRNAs in the A and P-sites.</text>
</comment>
<comment type="subunit">
    <text evidence="1">Part of the 30S ribosomal subunit. Forms a loose heterodimer with protein S19. Forms two bridges to the 50S subunit in the 70S ribosome.</text>
</comment>
<comment type="similarity">
    <text evidence="1">Belongs to the universal ribosomal protein uS13 family.</text>
</comment>
<dbReference type="EMBL" id="CP000608">
    <property type="protein sequence ID" value="ABO47412.1"/>
    <property type="molecule type" value="Genomic_DNA"/>
</dbReference>
<dbReference type="RefSeq" id="WP_003014373.1">
    <property type="nucleotide sequence ID" value="NC_009257.1"/>
</dbReference>
<dbReference type="SMR" id="A4IZR2"/>
<dbReference type="GeneID" id="75264239"/>
<dbReference type="KEGG" id="ftw:FTW_1736"/>
<dbReference type="HOGENOM" id="CLU_103849_1_2_6"/>
<dbReference type="GO" id="GO:0005829">
    <property type="term" value="C:cytosol"/>
    <property type="evidence" value="ECO:0007669"/>
    <property type="project" value="TreeGrafter"/>
</dbReference>
<dbReference type="GO" id="GO:0015935">
    <property type="term" value="C:small ribosomal subunit"/>
    <property type="evidence" value="ECO:0007669"/>
    <property type="project" value="TreeGrafter"/>
</dbReference>
<dbReference type="GO" id="GO:0019843">
    <property type="term" value="F:rRNA binding"/>
    <property type="evidence" value="ECO:0007669"/>
    <property type="project" value="UniProtKB-UniRule"/>
</dbReference>
<dbReference type="GO" id="GO:0003735">
    <property type="term" value="F:structural constituent of ribosome"/>
    <property type="evidence" value="ECO:0007669"/>
    <property type="project" value="InterPro"/>
</dbReference>
<dbReference type="GO" id="GO:0000049">
    <property type="term" value="F:tRNA binding"/>
    <property type="evidence" value="ECO:0007669"/>
    <property type="project" value="UniProtKB-UniRule"/>
</dbReference>
<dbReference type="GO" id="GO:0006412">
    <property type="term" value="P:translation"/>
    <property type="evidence" value="ECO:0007669"/>
    <property type="project" value="UniProtKB-UniRule"/>
</dbReference>
<dbReference type="FunFam" id="1.10.8.50:FF:000001">
    <property type="entry name" value="30S ribosomal protein S13"/>
    <property type="match status" value="1"/>
</dbReference>
<dbReference type="FunFam" id="4.10.910.10:FF:000001">
    <property type="entry name" value="30S ribosomal protein S13"/>
    <property type="match status" value="1"/>
</dbReference>
<dbReference type="Gene3D" id="1.10.8.50">
    <property type="match status" value="1"/>
</dbReference>
<dbReference type="Gene3D" id="4.10.910.10">
    <property type="entry name" value="30s ribosomal protein s13, domain 2"/>
    <property type="match status" value="1"/>
</dbReference>
<dbReference type="HAMAP" id="MF_01315">
    <property type="entry name" value="Ribosomal_uS13"/>
    <property type="match status" value="1"/>
</dbReference>
<dbReference type="InterPro" id="IPR027437">
    <property type="entry name" value="Rbsml_uS13_C"/>
</dbReference>
<dbReference type="InterPro" id="IPR001892">
    <property type="entry name" value="Ribosomal_uS13"/>
</dbReference>
<dbReference type="InterPro" id="IPR010979">
    <property type="entry name" value="Ribosomal_uS13-like_H2TH"/>
</dbReference>
<dbReference type="InterPro" id="IPR019980">
    <property type="entry name" value="Ribosomal_uS13_bac-type"/>
</dbReference>
<dbReference type="InterPro" id="IPR018269">
    <property type="entry name" value="Ribosomal_uS13_CS"/>
</dbReference>
<dbReference type="NCBIfam" id="TIGR03631">
    <property type="entry name" value="uS13_bact"/>
    <property type="match status" value="1"/>
</dbReference>
<dbReference type="PANTHER" id="PTHR10871">
    <property type="entry name" value="30S RIBOSOMAL PROTEIN S13/40S RIBOSOMAL PROTEIN S18"/>
    <property type="match status" value="1"/>
</dbReference>
<dbReference type="PANTHER" id="PTHR10871:SF1">
    <property type="entry name" value="SMALL RIBOSOMAL SUBUNIT PROTEIN US13M"/>
    <property type="match status" value="1"/>
</dbReference>
<dbReference type="Pfam" id="PF00416">
    <property type="entry name" value="Ribosomal_S13"/>
    <property type="match status" value="1"/>
</dbReference>
<dbReference type="PIRSF" id="PIRSF002134">
    <property type="entry name" value="Ribosomal_S13"/>
    <property type="match status" value="1"/>
</dbReference>
<dbReference type="SUPFAM" id="SSF46946">
    <property type="entry name" value="S13-like H2TH domain"/>
    <property type="match status" value="1"/>
</dbReference>
<dbReference type="PROSITE" id="PS00646">
    <property type="entry name" value="RIBOSOMAL_S13_1"/>
    <property type="match status" value="1"/>
</dbReference>
<dbReference type="PROSITE" id="PS50159">
    <property type="entry name" value="RIBOSOMAL_S13_2"/>
    <property type="match status" value="1"/>
</dbReference>
<reference key="1">
    <citation type="journal article" date="2007" name="PLoS ONE">
        <title>Complete genomic characterization of a pathogenic A.II strain of Francisella tularensis subspecies tularensis.</title>
        <authorList>
            <person name="Beckstrom-Sternberg S.M."/>
            <person name="Auerbach R.K."/>
            <person name="Godbole S."/>
            <person name="Pearson J.V."/>
            <person name="Beckstrom-Sternberg J.S."/>
            <person name="Deng Z."/>
            <person name="Munk C."/>
            <person name="Kubota K."/>
            <person name="Zhou Y."/>
            <person name="Bruce D."/>
            <person name="Noronha J."/>
            <person name="Scheuermann R.H."/>
            <person name="Wang A."/>
            <person name="Wei X."/>
            <person name="Wang J."/>
            <person name="Hao J."/>
            <person name="Wagner D.M."/>
            <person name="Brettin T.S."/>
            <person name="Brown N."/>
            <person name="Gilna P."/>
            <person name="Keim P.S."/>
        </authorList>
    </citation>
    <scope>NUCLEOTIDE SEQUENCE [LARGE SCALE GENOMIC DNA]</scope>
    <source>
        <strain>WY96-3418</strain>
    </source>
</reference>
<keyword id="KW-0687">Ribonucleoprotein</keyword>
<keyword id="KW-0689">Ribosomal protein</keyword>
<keyword id="KW-0694">RNA-binding</keyword>
<keyword id="KW-0699">rRNA-binding</keyword>
<keyword id="KW-0820">tRNA-binding</keyword>
<proteinExistence type="inferred from homology"/>
<organism>
    <name type="scientific">Francisella tularensis subsp. tularensis (strain WY96-3418)</name>
    <dbReference type="NCBI Taxonomy" id="418136"/>
    <lineage>
        <taxon>Bacteria</taxon>
        <taxon>Pseudomonadati</taxon>
        <taxon>Pseudomonadota</taxon>
        <taxon>Gammaproteobacteria</taxon>
        <taxon>Thiotrichales</taxon>
        <taxon>Francisellaceae</taxon>
        <taxon>Francisella</taxon>
    </lineage>
</organism>